<gene>
    <name evidence="1" type="primary">rplM</name>
    <name type="ordered locus">Meso_1164</name>
</gene>
<keyword id="KW-0687">Ribonucleoprotein</keyword>
<keyword id="KW-0689">Ribosomal protein</keyword>
<proteinExistence type="inferred from homology"/>
<dbReference type="EMBL" id="CP000390">
    <property type="protein sequence ID" value="ABG62560.1"/>
    <property type="molecule type" value="Genomic_DNA"/>
</dbReference>
<dbReference type="SMR" id="Q11J65"/>
<dbReference type="STRING" id="266779.Meso_1164"/>
<dbReference type="KEGG" id="mes:Meso_1164"/>
<dbReference type="eggNOG" id="COG0102">
    <property type="taxonomic scope" value="Bacteria"/>
</dbReference>
<dbReference type="HOGENOM" id="CLU_082184_2_0_5"/>
<dbReference type="OrthoDB" id="9801330at2"/>
<dbReference type="GO" id="GO:0022625">
    <property type="term" value="C:cytosolic large ribosomal subunit"/>
    <property type="evidence" value="ECO:0007669"/>
    <property type="project" value="TreeGrafter"/>
</dbReference>
<dbReference type="GO" id="GO:0003729">
    <property type="term" value="F:mRNA binding"/>
    <property type="evidence" value="ECO:0007669"/>
    <property type="project" value="TreeGrafter"/>
</dbReference>
<dbReference type="GO" id="GO:0003735">
    <property type="term" value="F:structural constituent of ribosome"/>
    <property type="evidence" value="ECO:0007669"/>
    <property type="project" value="InterPro"/>
</dbReference>
<dbReference type="GO" id="GO:0017148">
    <property type="term" value="P:negative regulation of translation"/>
    <property type="evidence" value="ECO:0007669"/>
    <property type="project" value="TreeGrafter"/>
</dbReference>
<dbReference type="GO" id="GO:0006412">
    <property type="term" value="P:translation"/>
    <property type="evidence" value="ECO:0007669"/>
    <property type="project" value="UniProtKB-UniRule"/>
</dbReference>
<dbReference type="CDD" id="cd00392">
    <property type="entry name" value="Ribosomal_L13"/>
    <property type="match status" value="1"/>
</dbReference>
<dbReference type="FunFam" id="3.90.1180.10:FF:000001">
    <property type="entry name" value="50S ribosomal protein L13"/>
    <property type="match status" value="1"/>
</dbReference>
<dbReference type="Gene3D" id="3.90.1180.10">
    <property type="entry name" value="Ribosomal protein L13"/>
    <property type="match status" value="1"/>
</dbReference>
<dbReference type="HAMAP" id="MF_01366">
    <property type="entry name" value="Ribosomal_uL13"/>
    <property type="match status" value="1"/>
</dbReference>
<dbReference type="InterPro" id="IPR005822">
    <property type="entry name" value="Ribosomal_uL13"/>
</dbReference>
<dbReference type="InterPro" id="IPR005823">
    <property type="entry name" value="Ribosomal_uL13_bac-type"/>
</dbReference>
<dbReference type="InterPro" id="IPR036899">
    <property type="entry name" value="Ribosomal_uL13_sf"/>
</dbReference>
<dbReference type="NCBIfam" id="TIGR01066">
    <property type="entry name" value="rplM_bact"/>
    <property type="match status" value="1"/>
</dbReference>
<dbReference type="PANTHER" id="PTHR11545:SF2">
    <property type="entry name" value="LARGE RIBOSOMAL SUBUNIT PROTEIN UL13M"/>
    <property type="match status" value="1"/>
</dbReference>
<dbReference type="PANTHER" id="PTHR11545">
    <property type="entry name" value="RIBOSOMAL PROTEIN L13"/>
    <property type="match status" value="1"/>
</dbReference>
<dbReference type="Pfam" id="PF00572">
    <property type="entry name" value="Ribosomal_L13"/>
    <property type="match status" value="1"/>
</dbReference>
<dbReference type="PIRSF" id="PIRSF002181">
    <property type="entry name" value="Ribosomal_L13"/>
    <property type="match status" value="1"/>
</dbReference>
<dbReference type="SUPFAM" id="SSF52161">
    <property type="entry name" value="Ribosomal protein L13"/>
    <property type="match status" value="1"/>
</dbReference>
<protein>
    <recommendedName>
        <fullName evidence="1">Large ribosomal subunit protein uL13</fullName>
    </recommendedName>
    <alternativeName>
        <fullName evidence="2">50S ribosomal protein L13</fullName>
    </alternativeName>
</protein>
<accession>Q11J65</accession>
<sequence length="153" mass="17288">MKTFSQKPAEVTKKWVLIDAEGLVVGRLATIVANRLRGKHKPTFTPHVDDGDNVIIINADKVVFTGKKYQDKTYYWHTGYAGGIKERTARQILEGRFPERVVEKAVERMIPRGPLGRRQMKNLRVYAGSEHPHSAQNPEKVDIAALNKKNARG</sequence>
<evidence type="ECO:0000255" key="1">
    <source>
        <dbReference type="HAMAP-Rule" id="MF_01366"/>
    </source>
</evidence>
<evidence type="ECO:0000305" key="2"/>
<name>RL13_CHESB</name>
<feature type="chain" id="PRO_0000261748" description="Large ribosomal subunit protein uL13">
    <location>
        <begin position="1"/>
        <end position="153"/>
    </location>
</feature>
<organism>
    <name type="scientific">Chelativorans sp. (strain BNC1)</name>
    <dbReference type="NCBI Taxonomy" id="266779"/>
    <lineage>
        <taxon>Bacteria</taxon>
        <taxon>Pseudomonadati</taxon>
        <taxon>Pseudomonadota</taxon>
        <taxon>Alphaproteobacteria</taxon>
        <taxon>Hyphomicrobiales</taxon>
        <taxon>Phyllobacteriaceae</taxon>
        <taxon>Chelativorans</taxon>
    </lineage>
</organism>
<comment type="function">
    <text evidence="1">This protein is one of the early assembly proteins of the 50S ribosomal subunit, although it is not seen to bind rRNA by itself. It is important during the early stages of 50S assembly.</text>
</comment>
<comment type="subunit">
    <text evidence="1">Part of the 50S ribosomal subunit.</text>
</comment>
<comment type="similarity">
    <text evidence="1">Belongs to the universal ribosomal protein uL13 family.</text>
</comment>
<reference key="1">
    <citation type="submission" date="2006-06" db="EMBL/GenBank/DDBJ databases">
        <title>Complete sequence of chromosome of Mesorhizobium sp. BNC1.</title>
        <authorList>
            <consortium name="US DOE Joint Genome Institute"/>
            <person name="Copeland A."/>
            <person name="Lucas S."/>
            <person name="Lapidus A."/>
            <person name="Barry K."/>
            <person name="Detter J.C."/>
            <person name="Glavina del Rio T."/>
            <person name="Hammon N."/>
            <person name="Israni S."/>
            <person name="Dalin E."/>
            <person name="Tice H."/>
            <person name="Pitluck S."/>
            <person name="Chertkov O."/>
            <person name="Brettin T."/>
            <person name="Bruce D."/>
            <person name="Han C."/>
            <person name="Tapia R."/>
            <person name="Gilna P."/>
            <person name="Schmutz J."/>
            <person name="Larimer F."/>
            <person name="Land M."/>
            <person name="Hauser L."/>
            <person name="Kyrpides N."/>
            <person name="Mikhailova N."/>
            <person name="Richardson P."/>
        </authorList>
    </citation>
    <scope>NUCLEOTIDE SEQUENCE [LARGE SCALE GENOMIC DNA]</scope>
    <source>
        <strain>BNC1</strain>
    </source>
</reference>